<comment type="function">
    <text evidence="1">ATP-dependent RNA helicase associated with the nuclear pore complex and essential for mRNA export from the nucleus. May participate in a terminal step of mRNA export through the removal of proteins that accompany mRNA through the nucleopore complex. May also be involved in early transcription (By similarity).</text>
</comment>
<comment type="catalytic activity">
    <reaction>
        <text>ATP + H2O = ADP + phosphate + H(+)</text>
        <dbReference type="Rhea" id="RHEA:13065"/>
        <dbReference type="ChEBI" id="CHEBI:15377"/>
        <dbReference type="ChEBI" id="CHEBI:15378"/>
        <dbReference type="ChEBI" id="CHEBI:30616"/>
        <dbReference type="ChEBI" id="CHEBI:43474"/>
        <dbReference type="ChEBI" id="CHEBI:456216"/>
        <dbReference type="EC" id="3.6.4.13"/>
    </reaction>
</comment>
<comment type="subunit">
    <text evidence="1">Associates with the nuclear pore complex.</text>
</comment>
<comment type="subcellular location">
    <subcellularLocation>
        <location evidence="1">Cytoplasm</location>
    </subcellularLocation>
    <subcellularLocation>
        <location>Nucleus</location>
        <location>Nuclear pore complex</location>
    </subcellularLocation>
    <subcellularLocation>
        <location evidence="1">Nucleus membrane</location>
        <topology evidence="1">Peripheral membrane protein</topology>
        <orientation evidence="1">Cytoplasmic side</orientation>
    </subcellularLocation>
    <text evidence="1">Nuclear pore complex cytoplasmic fibrils.</text>
</comment>
<comment type="domain">
    <text>The Q motif is unique to and characteristic of the DEAD box family of RNA helicases and controls ATP binding and hydrolysis.</text>
</comment>
<comment type="similarity">
    <text evidence="4">Belongs to the DEAD box helicase family. DDX19/DBP5 subfamily.</text>
</comment>
<feature type="chain" id="PRO_0000232227" description="ATP-dependent RNA helicase DBP5">
    <location>
        <begin position="1"/>
        <end position="456"/>
    </location>
</feature>
<feature type="domain" description="Helicase ATP-binding" evidence="2">
    <location>
        <begin position="97"/>
        <end position="264"/>
    </location>
</feature>
<feature type="domain" description="Helicase C-terminal" evidence="3">
    <location>
        <begin position="275"/>
        <end position="451"/>
    </location>
</feature>
<feature type="short sequence motif" description="Q motif">
    <location>
        <begin position="64"/>
        <end position="92"/>
    </location>
</feature>
<feature type="short sequence motif" description="DEAD box">
    <location>
        <begin position="211"/>
        <end position="214"/>
    </location>
</feature>
<feature type="binding site" evidence="2">
    <location>
        <begin position="110"/>
        <end position="117"/>
    </location>
    <ligand>
        <name>ATP</name>
        <dbReference type="ChEBI" id="CHEBI:30616"/>
    </ligand>
</feature>
<gene>
    <name type="primary">DBP5</name>
    <name type="ORF">UMAG_03765</name>
</gene>
<reference key="1">
    <citation type="journal article" date="2006" name="Nature">
        <title>Insights from the genome of the biotrophic fungal plant pathogen Ustilago maydis.</title>
        <authorList>
            <person name="Kaemper J."/>
            <person name="Kahmann R."/>
            <person name="Boelker M."/>
            <person name="Ma L.-J."/>
            <person name="Brefort T."/>
            <person name="Saville B.J."/>
            <person name="Banuett F."/>
            <person name="Kronstad J.W."/>
            <person name="Gold S.E."/>
            <person name="Mueller O."/>
            <person name="Perlin M.H."/>
            <person name="Woesten H.A.B."/>
            <person name="de Vries R."/>
            <person name="Ruiz-Herrera J."/>
            <person name="Reynaga-Pena C.G."/>
            <person name="Snetselaar K."/>
            <person name="McCann M."/>
            <person name="Perez-Martin J."/>
            <person name="Feldbruegge M."/>
            <person name="Basse C.W."/>
            <person name="Steinberg G."/>
            <person name="Ibeas J.I."/>
            <person name="Holloman W."/>
            <person name="Guzman P."/>
            <person name="Farman M.L."/>
            <person name="Stajich J.E."/>
            <person name="Sentandreu R."/>
            <person name="Gonzalez-Prieto J.M."/>
            <person name="Kennell J.C."/>
            <person name="Molina L."/>
            <person name="Schirawski J."/>
            <person name="Mendoza-Mendoza A."/>
            <person name="Greilinger D."/>
            <person name="Muench K."/>
            <person name="Roessel N."/>
            <person name="Scherer M."/>
            <person name="Vranes M."/>
            <person name="Ladendorf O."/>
            <person name="Vincon V."/>
            <person name="Fuchs U."/>
            <person name="Sandrock B."/>
            <person name="Meng S."/>
            <person name="Ho E.C.H."/>
            <person name="Cahill M.J."/>
            <person name="Boyce K.J."/>
            <person name="Klose J."/>
            <person name="Klosterman S.J."/>
            <person name="Deelstra H.J."/>
            <person name="Ortiz-Castellanos L."/>
            <person name="Li W."/>
            <person name="Sanchez-Alonso P."/>
            <person name="Schreier P.H."/>
            <person name="Haeuser-Hahn I."/>
            <person name="Vaupel M."/>
            <person name="Koopmann E."/>
            <person name="Friedrich G."/>
            <person name="Voss H."/>
            <person name="Schlueter T."/>
            <person name="Margolis J."/>
            <person name="Platt D."/>
            <person name="Swimmer C."/>
            <person name="Gnirke A."/>
            <person name="Chen F."/>
            <person name="Vysotskaia V."/>
            <person name="Mannhaupt G."/>
            <person name="Gueldener U."/>
            <person name="Muensterkoetter M."/>
            <person name="Haase D."/>
            <person name="Oesterheld M."/>
            <person name="Mewes H.-W."/>
            <person name="Mauceli E.W."/>
            <person name="DeCaprio D."/>
            <person name="Wade C.M."/>
            <person name="Butler J."/>
            <person name="Young S.K."/>
            <person name="Jaffe D.B."/>
            <person name="Calvo S.E."/>
            <person name="Nusbaum C."/>
            <person name="Galagan J.E."/>
            <person name="Birren B.W."/>
        </authorList>
    </citation>
    <scope>NUCLEOTIDE SEQUENCE [LARGE SCALE GENOMIC DNA]</scope>
    <source>
        <strain>DSM 14603 / FGSC 9021 / UM521</strain>
    </source>
</reference>
<reference key="2">
    <citation type="submission" date="2014-09" db="EMBL/GenBank/DDBJ databases">
        <authorList>
            <person name="Gueldener U."/>
            <person name="Muensterkoetter M."/>
            <person name="Walter M.C."/>
            <person name="Mannhaupt G."/>
            <person name="Kahmann R."/>
        </authorList>
    </citation>
    <scope>GENOME REANNOTATION</scope>
    <source>
        <strain>DSM 14603 / FGSC 9021 / UM521</strain>
    </source>
</reference>
<protein>
    <recommendedName>
        <fullName>ATP-dependent RNA helicase DBP5</fullName>
        <ecNumber>3.6.4.13</ecNumber>
    </recommendedName>
</protein>
<proteinExistence type="inferred from homology"/>
<dbReference type="EC" id="3.6.4.13"/>
<dbReference type="EMBL" id="CM003149">
    <property type="protein sequence ID" value="KIS68185.1"/>
    <property type="molecule type" value="Genomic_DNA"/>
</dbReference>
<dbReference type="RefSeq" id="XP_011390218.1">
    <property type="nucleotide sequence ID" value="XM_011391916.1"/>
</dbReference>
<dbReference type="SMR" id="Q4P7Z8"/>
<dbReference type="FunCoup" id="Q4P7Z8">
    <property type="interactions" value="330"/>
</dbReference>
<dbReference type="STRING" id="237631.Q4P7Z8"/>
<dbReference type="EnsemblFungi" id="KIS68185">
    <property type="protein sequence ID" value="KIS68185"/>
    <property type="gene ID" value="UMAG_03765"/>
</dbReference>
<dbReference type="GeneID" id="23564133"/>
<dbReference type="KEGG" id="uma:UMAG_03765"/>
<dbReference type="VEuPathDB" id="FungiDB:UMAG_03765"/>
<dbReference type="eggNOG" id="KOG0332">
    <property type="taxonomic scope" value="Eukaryota"/>
</dbReference>
<dbReference type="HOGENOM" id="CLU_003041_1_0_1"/>
<dbReference type="InParanoid" id="Q4P7Z8"/>
<dbReference type="OMA" id="IAAETRW"/>
<dbReference type="OrthoDB" id="10265785at2759"/>
<dbReference type="Proteomes" id="UP000000561">
    <property type="component" value="Chromosome 10"/>
</dbReference>
<dbReference type="GO" id="GO:0005934">
    <property type="term" value="C:cellular bud tip"/>
    <property type="evidence" value="ECO:0007669"/>
    <property type="project" value="EnsemblFungi"/>
</dbReference>
<dbReference type="GO" id="GO:0010494">
    <property type="term" value="C:cytoplasmic stress granule"/>
    <property type="evidence" value="ECO:0000318"/>
    <property type="project" value="GO_Central"/>
</dbReference>
<dbReference type="GO" id="GO:0031965">
    <property type="term" value="C:nuclear membrane"/>
    <property type="evidence" value="ECO:0007669"/>
    <property type="project" value="UniProtKB-SubCell"/>
</dbReference>
<dbReference type="GO" id="GO:0044614">
    <property type="term" value="C:nuclear pore cytoplasmic filaments"/>
    <property type="evidence" value="ECO:0007669"/>
    <property type="project" value="EnsemblFungi"/>
</dbReference>
<dbReference type="GO" id="GO:0005634">
    <property type="term" value="C:nucleus"/>
    <property type="evidence" value="ECO:0000318"/>
    <property type="project" value="GO_Central"/>
</dbReference>
<dbReference type="GO" id="GO:0005524">
    <property type="term" value="F:ATP binding"/>
    <property type="evidence" value="ECO:0007669"/>
    <property type="project" value="UniProtKB-KW"/>
</dbReference>
<dbReference type="GO" id="GO:0016887">
    <property type="term" value="F:ATP hydrolysis activity"/>
    <property type="evidence" value="ECO:0007669"/>
    <property type="project" value="RHEA"/>
</dbReference>
<dbReference type="GO" id="GO:0000822">
    <property type="term" value="F:inositol hexakisphosphate binding"/>
    <property type="evidence" value="ECO:0007669"/>
    <property type="project" value="EnsemblFungi"/>
</dbReference>
<dbReference type="GO" id="GO:0003729">
    <property type="term" value="F:mRNA binding"/>
    <property type="evidence" value="ECO:0000318"/>
    <property type="project" value="GO_Central"/>
</dbReference>
<dbReference type="GO" id="GO:0003724">
    <property type="term" value="F:RNA helicase activity"/>
    <property type="evidence" value="ECO:0000318"/>
    <property type="project" value="GO_Central"/>
</dbReference>
<dbReference type="GO" id="GO:0016973">
    <property type="term" value="P:poly(A)+ mRNA export from nucleus"/>
    <property type="evidence" value="ECO:0000318"/>
    <property type="project" value="GO_Central"/>
</dbReference>
<dbReference type="GO" id="GO:0015031">
    <property type="term" value="P:protein transport"/>
    <property type="evidence" value="ECO:0007669"/>
    <property type="project" value="UniProtKB-KW"/>
</dbReference>
<dbReference type="GO" id="GO:0006415">
    <property type="term" value="P:translational termination"/>
    <property type="evidence" value="ECO:0007669"/>
    <property type="project" value="EnsemblFungi"/>
</dbReference>
<dbReference type="GO" id="GO:0006409">
    <property type="term" value="P:tRNA export from nucleus"/>
    <property type="evidence" value="ECO:0007669"/>
    <property type="project" value="EnsemblFungi"/>
</dbReference>
<dbReference type="CDD" id="cd17963">
    <property type="entry name" value="DEADc_DDX19_DDX25"/>
    <property type="match status" value="1"/>
</dbReference>
<dbReference type="CDD" id="cd18787">
    <property type="entry name" value="SF2_C_DEAD"/>
    <property type="match status" value="1"/>
</dbReference>
<dbReference type="FunFam" id="3.40.50.300:FF:000849">
    <property type="entry name" value="ATP-dependent RNA helicase DBP5"/>
    <property type="match status" value="1"/>
</dbReference>
<dbReference type="FunFam" id="3.40.50.300:FF:000318">
    <property type="entry name" value="ATP-dependent RNA helicase DDX19B"/>
    <property type="match status" value="1"/>
</dbReference>
<dbReference type="Gene3D" id="3.40.50.300">
    <property type="entry name" value="P-loop containing nucleotide triphosphate hydrolases"/>
    <property type="match status" value="2"/>
</dbReference>
<dbReference type="InterPro" id="IPR011545">
    <property type="entry name" value="DEAD/DEAH_box_helicase_dom"/>
</dbReference>
<dbReference type="InterPro" id="IPR014001">
    <property type="entry name" value="Helicase_ATP-bd"/>
</dbReference>
<dbReference type="InterPro" id="IPR001650">
    <property type="entry name" value="Helicase_C-like"/>
</dbReference>
<dbReference type="InterPro" id="IPR027417">
    <property type="entry name" value="P-loop_NTPase"/>
</dbReference>
<dbReference type="InterPro" id="IPR000629">
    <property type="entry name" value="RNA-helicase_DEAD-box_CS"/>
</dbReference>
<dbReference type="InterPro" id="IPR014014">
    <property type="entry name" value="RNA_helicase_DEAD_Q_motif"/>
</dbReference>
<dbReference type="PANTHER" id="PTHR47958">
    <property type="entry name" value="ATP-DEPENDENT RNA HELICASE DBP3"/>
    <property type="match status" value="1"/>
</dbReference>
<dbReference type="Pfam" id="PF00270">
    <property type="entry name" value="DEAD"/>
    <property type="match status" value="1"/>
</dbReference>
<dbReference type="Pfam" id="PF00271">
    <property type="entry name" value="Helicase_C"/>
    <property type="match status" value="1"/>
</dbReference>
<dbReference type="SMART" id="SM00487">
    <property type="entry name" value="DEXDc"/>
    <property type="match status" value="1"/>
</dbReference>
<dbReference type="SMART" id="SM00490">
    <property type="entry name" value="HELICc"/>
    <property type="match status" value="1"/>
</dbReference>
<dbReference type="SUPFAM" id="SSF52540">
    <property type="entry name" value="P-loop containing nucleoside triphosphate hydrolases"/>
    <property type="match status" value="1"/>
</dbReference>
<dbReference type="PROSITE" id="PS00039">
    <property type="entry name" value="DEAD_ATP_HELICASE"/>
    <property type="match status" value="1"/>
</dbReference>
<dbReference type="PROSITE" id="PS51192">
    <property type="entry name" value="HELICASE_ATP_BIND_1"/>
    <property type="match status" value="1"/>
</dbReference>
<dbReference type="PROSITE" id="PS51194">
    <property type="entry name" value="HELICASE_CTER"/>
    <property type="match status" value="1"/>
</dbReference>
<dbReference type="PROSITE" id="PS51195">
    <property type="entry name" value="Q_MOTIF"/>
    <property type="match status" value="1"/>
</dbReference>
<evidence type="ECO:0000250" key="1"/>
<evidence type="ECO:0000255" key="2">
    <source>
        <dbReference type="PROSITE-ProRule" id="PRU00541"/>
    </source>
</evidence>
<evidence type="ECO:0000255" key="3">
    <source>
        <dbReference type="PROSITE-ProRule" id="PRU00542"/>
    </source>
</evidence>
<evidence type="ECO:0000305" key="4"/>
<name>DBP5_MYCMD</name>
<sequence length="456" mass="50780">MSESKDKTTAPAADSNVNEIASGISGLLSSKDVAESNLRESSHEVQVTLADQQADPNSPLYSAKSFEALGLHENLLKGIYAMKYQKPSKIQEKALPLLLQNPPKNMIGQSQSGTGKTAAFILTMLSRIDYDLQKPQAIALAPSRELARQIMDVARTMSKFTNVTTCLCLPDEVKRGEKITAQLIIGTPGKTFDMIKSKGIDTAAIKVFVLDEADNMLDQQSLGEQSIRVKNTMPKSCQLVLFSATFPTNVYDFAVRIAPGANEIRLKQEELSVEGIKQFYMDCKDEDHKYEVLVELYNLLTIGQSIIFCAKRETADRIAQKMTQEGHKVDSLHGRLETADRDRTIDAFRDGKSKVLISTNVIARGIDIQQVTLVINYDMPLTQTGEADAETYLHRIGRTGRFGRKGVSINFVHDQQSWSYMDQIEKALKCQITRVATNDLEEMEYTIKEALKQIGK</sequence>
<organism>
    <name type="scientific">Mycosarcoma maydis</name>
    <name type="common">Corn smut fungus</name>
    <name type="synonym">Ustilago maydis</name>
    <dbReference type="NCBI Taxonomy" id="5270"/>
    <lineage>
        <taxon>Eukaryota</taxon>
        <taxon>Fungi</taxon>
        <taxon>Dikarya</taxon>
        <taxon>Basidiomycota</taxon>
        <taxon>Ustilaginomycotina</taxon>
        <taxon>Ustilaginomycetes</taxon>
        <taxon>Ustilaginales</taxon>
        <taxon>Ustilaginaceae</taxon>
        <taxon>Mycosarcoma</taxon>
    </lineage>
</organism>
<keyword id="KW-0067">ATP-binding</keyword>
<keyword id="KW-0963">Cytoplasm</keyword>
<keyword id="KW-0347">Helicase</keyword>
<keyword id="KW-0378">Hydrolase</keyword>
<keyword id="KW-0472">Membrane</keyword>
<keyword id="KW-0509">mRNA transport</keyword>
<keyword id="KW-0906">Nuclear pore complex</keyword>
<keyword id="KW-0547">Nucleotide-binding</keyword>
<keyword id="KW-0539">Nucleus</keyword>
<keyword id="KW-0653">Protein transport</keyword>
<keyword id="KW-1185">Reference proteome</keyword>
<keyword id="KW-0694">RNA-binding</keyword>
<keyword id="KW-0811">Translocation</keyword>
<keyword id="KW-0813">Transport</keyword>
<accession>Q4P7Z8</accession>
<accession>A0A0D1E0C9</accession>